<reference key="1">
    <citation type="journal article" date="2008" name="Proc. Natl. Acad. Sci. U.S.A.">
        <title>Niche adaptation and genome expansion in the chlorophyll d-producing cyanobacterium Acaryochloris marina.</title>
        <authorList>
            <person name="Swingley W.D."/>
            <person name="Chen M."/>
            <person name="Cheung P.C."/>
            <person name="Conrad A.L."/>
            <person name="Dejesa L.C."/>
            <person name="Hao J."/>
            <person name="Honchak B.M."/>
            <person name="Karbach L.E."/>
            <person name="Kurdoglu A."/>
            <person name="Lahiri S."/>
            <person name="Mastrian S.D."/>
            <person name="Miyashita H."/>
            <person name="Page L."/>
            <person name="Ramakrishna P."/>
            <person name="Satoh S."/>
            <person name="Sattley W.M."/>
            <person name="Shimada Y."/>
            <person name="Taylor H.L."/>
            <person name="Tomo T."/>
            <person name="Tsuchiya T."/>
            <person name="Wang Z.T."/>
            <person name="Raymond J."/>
            <person name="Mimuro M."/>
            <person name="Blankenship R.E."/>
            <person name="Touchman J.W."/>
        </authorList>
    </citation>
    <scope>NUCLEOTIDE SEQUENCE [LARGE SCALE GENOMIC DNA]</scope>
    <source>
        <strain>MBIC 11017</strain>
    </source>
</reference>
<keyword id="KW-0028">Amino-acid biosynthesis</keyword>
<keyword id="KW-0055">Arginine biosynthesis</keyword>
<keyword id="KW-0963">Cytoplasm</keyword>
<keyword id="KW-0521">NADP</keyword>
<keyword id="KW-0560">Oxidoreductase</keyword>
<keyword id="KW-1185">Reference proteome</keyword>
<feature type="chain" id="PRO_1000076725" description="N-acetyl-gamma-glutamyl-phosphate reductase">
    <location>
        <begin position="1"/>
        <end position="352"/>
    </location>
</feature>
<feature type="active site" evidence="1">
    <location>
        <position position="155"/>
    </location>
</feature>
<sequence>MGSQEDIPVGIIGASGYGGVQLTRLLLEHPHVHLAYLGGDSSAGRPFADLYPHLGFKQDLKVEAIDLDKVVERTQVVFLALPNGLAAEMAPTLVECGCKVLDLSADYRFTNLDTYEDWYGTKRQDRDLASTAVYGLPELYRQGISTASLVGCPGCFPTASLLALAPLLKQGLIDPNSAIIDAKTGTSGGGRQAKTHLLLAEANGSIGPYGVAHHRHTPEIEQVSSDLAGREVVVQFTPHLAPMTRGILATVYATMRDPGLVREDLITIFSAFYRNSPWVKVLPGSTYPFTKWAYGTNLCYLGIEVDQRTGRVIVISAIDNLMKGQAGQAVQCLNLMMGWPETMGLPELTFYP</sequence>
<gene>
    <name evidence="1" type="primary">argC</name>
    <name type="ordered locus">AM1_0609</name>
</gene>
<comment type="function">
    <text evidence="1">Catalyzes the NADPH-dependent reduction of N-acetyl-5-glutamyl phosphate to yield N-acetyl-L-glutamate 5-semialdehyde.</text>
</comment>
<comment type="catalytic activity">
    <reaction evidence="1">
        <text>N-acetyl-L-glutamate 5-semialdehyde + phosphate + NADP(+) = N-acetyl-L-glutamyl 5-phosphate + NADPH + H(+)</text>
        <dbReference type="Rhea" id="RHEA:21588"/>
        <dbReference type="ChEBI" id="CHEBI:15378"/>
        <dbReference type="ChEBI" id="CHEBI:29123"/>
        <dbReference type="ChEBI" id="CHEBI:43474"/>
        <dbReference type="ChEBI" id="CHEBI:57783"/>
        <dbReference type="ChEBI" id="CHEBI:57936"/>
        <dbReference type="ChEBI" id="CHEBI:58349"/>
        <dbReference type="EC" id="1.2.1.38"/>
    </reaction>
</comment>
<comment type="pathway">
    <text evidence="1">Amino-acid biosynthesis; L-arginine biosynthesis; N(2)-acetyl-L-ornithine from L-glutamate: step 3/4.</text>
</comment>
<comment type="subcellular location">
    <subcellularLocation>
        <location evidence="1">Cytoplasm</location>
    </subcellularLocation>
</comment>
<comment type="similarity">
    <text evidence="1">Belongs to the NAGSA dehydrogenase family. Type 1 subfamily.</text>
</comment>
<accession>B0CD68</accession>
<protein>
    <recommendedName>
        <fullName evidence="1">N-acetyl-gamma-glutamyl-phosphate reductase</fullName>
        <shortName evidence="1">AGPR</shortName>
        <ecNumber evidence="1">1.2.1.38</ecNumber>
    </recommendedName>
    <alternativeName>
        <fullName evidence="1">N-acetyl-glutamate semialdehyde dehydrogenase</fullName>
        <shortName evidence="1">NAGSA dehydrogenase</shortName>
    </alternativeName>
</protein>
<dbReference type="EC" id="1.2.1.38" evidence="1"/>
<dbReference type="EMBL" id="CP000828">
    <property type="protein sequence ID" value="ABW25659.1"/>
    <property type="molecule type" value="Genomic_DNA"/>
</dbReference>
<dbReference type="RefSeq" id="WP_012161258.1">
    <property type="nucleotide sequence ID" value="NC_009925.1"/>
</dbReference>
<dbReference type="SMR" id="B0CD68"/>
<dbReference type="STRING" id="329726.AM1_0609"/>
<dbReference type="KEGG" id="amr:AM1_0609"/>
<dbReference type="eggNOG" id="COG0002">
    <property type="taxonomic scope" value="Bacteria"/>
</dbReference>
<dbReference type="HOGENOM" id="CLU_006384_0_1_3"/>
<dbReference type="OrthoDB" id="9801289at2"/>
<dbReference type="UniPathway" id="UPA00068">
    <property type="reaction ID" value="UER00108"/>
</dbReference>
<dbReference type="Proteomes" id="UP000000268">
    <property type="component" value="Chromosome"/>
</dbReference>
<dbReference type="GO" id="GO:0005737">
    <property type="term" value="C:cytoplasm"/>
    <property type="evidence" value="ECO:0007669"/>
    <property type="project" value="UniProtKB-SubCell"/>
</dbReference>
<dbReference type="GO" id="GO:0003942">
    <property type="term" value="F:N-acetyl-gamma-glutamyl-phosphate reductase activity"/>
    <property type="evidence" value="ECO:0007669"/>
    <property type="project" value="UniProtKB-UniRule"/>
</dbReference>
<dbReference type="GO" id="GO:0051287">
    <property type="term" value="F:NAD binding"/>
    <property type="evidence" value="ECO:0007669"/>
    <property type="project" value="InterPro"/>
</dbReference>
<dbReference type="GO" id="GO:0070401">
    <property type="term" value="F:NADP+ binding"/>
    <property type="evidence" value="ECO:0007669"/>
    <property type="project" value="InterPro"/>
</dbReference>
<dbReference type="GO" id="GO:0006526">
    <property type="term" value="P:L-arginine biosynthetic process"/>
    <property type="evidence" value="ECO:0007669"/>
    <property type="project" value="UniProtKB-UniRule"/>
</dbReference>
<dbReference type="CDD" id="cd23934">
    <property type="entry name" value="AGPR_1_C"/>
    <property type="match status" value="1"/>
</dbReference>
<dbReference type="CDD" id="cd17895">
    <property type="entry name" value="AGPR_1_N"/>
    <property type="match status" value="1"/>
</dbReference>
<dbReference type="FunFam" id="3.30.360.10:FF:000014">
    <property type="entry name" value="N-acetyl-gamma-glutamyl-phosphate reductase"/>
    <property type="match status" value="1"/>
</dbReference>
<dbReference type="Gene3D" id="3.30.360.10">
    <property type="entry name" value="Dihydrodipicolinate Reductase, domain 2"/>
    <property type="match status" value="1"/>
</dbReference>
<dbReference type="Gene3D" id="3.40.50.720">
    <property type="entry name" value="NAD(P)-binding Rossmann-like Domain"/>
    <property type="match status" value="1"/>
</dbReference>
<dbReference type="HAMAP" id="MF_00150">
    <property type="entry name" value="ArgC_type1"/>
    <property type="match status" value="1"/>
</dbReference>
<dbReference type="InterPro" id="IPR023013">
    <property type="entry name" value="AGPR_AS"/>
</dbReference>
<dbReference type="InterPro" id="IPR000706">
    <property type="entry name" value="AGPR_type-1"/>
</dbReference>
<dbReference type="InterPro" id="IPR036291">
    <property type="entry name" value="NAD(P)-bd_dom_sf"/>
</dbReference>
<dbReference type="InterPro" id="IPR050085">
    <property type="entry name" value="NAGSA_dehydrogenase"/>
</dbReference>
<dbReference type="InterPro" id="IPR000534">
    <property type="entry name" value="Semialdehyde_DH_NAD-bd"/>
</dbReference>
<dbReference type="NCBIfam" id="TIGR01850">
    <property type="entry name" value="argC"/>
    <property type="match status" value="1"/>
</dbReference>
<dbReference type="PANTHER" id="PTHR32338:SF10">
    <property type="entry name" value="N-ACETYL-GAMMA-GLUTAMYL-PHOSPHATE REDUCTASE, CHLOROPLASTIC-RELATED"/>
    <property type="match status" value="1"/>
</dbReference>
<dbReference type="PANTHER" id="PTHR32338">
    <property type="entry name" value="N-ACETYL-GAMMA-GLUTAMYL-PHOSPHATE REDUCTASE, CHLOROPLASTIC-RELATED-RELATED"/>
    <property type="match status" value="1"/>
</dbReference>
<dbReference type="Pfam" id="PF01118">
    <property type="entry name" value="Semialdhyde_dh"/>
    <property type="match status" value="1"/>
</dbReference>
<dbReference type="Pfam" id="PF22698">
    <property type="entry name" value="Semialdhyde_dhC_1"/>
    <property type="match status" value="1"/>
</dbReference>
<dbReference type="SMART" id="SM00859">
    <property type="entry name" value="Semialdhyde_dh"/>
    <property type="match status" value="1"/>
</dbReference>
<dbReference type="SUPFAM" id="SSF55347">
    <property type="entry name" value="Glyceraldehyde-3-phosphate dehydrogenase-like, C-terminal domain"/>
    <property type="match status" value="1"/>
</dbReference>
<dbReference type="SUPFAM" id="SSF51735">
    <property type="entry name" value="NAD(P)-binding Rossmann-fold domains"/>
    <property type="match status" value="1"/>
</dbReference>
<dbReference type="PROSITE" id="PS01224">
    <property type="entry name" value="ARGC"/>
    <property type="match status" value="1"/>
</dbReference>
<evidence type="ECO:0000255" key="1">
    <source>
        <dbReference type="HAMAP-Rule" id="MF_00150"/>
    </source>
</evidence>
<proteinExistence type="inferred from homology"/>
<organism>
    <name type="scientific">Acaryochloris marina (strain MBIC 11017)</name>
    <dbReference type="NCBI Taxonomy" id="329726"/>
    <lineage>
        <taxon>Bacteria</taxon>
        <taxon>Bacillati</taxon>
        <taxon>Cyanobacteriota</taxon>
        <taxon>Cyanophyceae</taxon>
        <taxon>Acaryochloridales</taxon>
        <taxon>Acaryochloridaceae</taxon>
        <taxon>Acaryochloris</taxon>
    </lineage>
</organism>
<name>ARGC_ACAM1</name>